<sequence length="204" mass="22326">MSAIVLNEKMEKASELALPESFSGINPHNLYLYVKSAQAAMRANSASALTRAEVRGGGKKPWAQKGGGRARAGSRRSPVFVGGGKAFGPKNNRNYDLKVNKKQKKLALNFALNEHAQKGSLFIVDSIEIASGKTKDAATLFKALNQRDTLFVKTVLDEKTYLAFENIASTYVIEENELNAYLAANYRSLVIEKAVWENLVGEAK</sequence>
<name>RL4_SULDN</name>
<gene>
    <name evidence="1" type="primary">rplD</name>
    <name type="ordered locus">Suden_0287</name>
</gene>
<evidence type="ECO:0000255" key="1">
    <source>
        <dbReference type="HAMAP-Rule" id="MF_01328"/>
    </source>
</evidence>
<evidence type="ECO:0000256" key="2">
    <source>
        <dbReference type="SAM" id="MobiDB-lite"/>
    </source>
</evidence>
<evidence type="ECO:0000305" key="3"/>
<reference key="1">
    <citation type="journal article" date="2008" name="Appl. Environ. Microbiol.">
        <title>Genome of the epsilonproteobacterial chemolithoautotroph Sulfurimonas denitrificans.</title>
        <authorList>
            <person name="Sievert S.M."/>
            <person name="Scott K.M."/>
            <person name="Klotz M.G."/>
            <person name="Chain P.S.G."/>
            <person name="Hauser L.J."/>
            <person name="Hemp J."/>
            <person name="Huegler M."/>
            <person name="Land M."/>
            <person name="Lapidus A."/>
            <person name="Larimer F.W."/>
            <person name="Lucas S."/>
            <person name="Malfatti S.A."/>
            <person name="Meyer F."/>
            <person name="Paulsen I.T."/>
            <person name="Ren Q."/>
            <person name="Simon J."/>
            <person name="Bailey K."/>
            <person name="Diaz E."/>
            <person name="Fitzpatrick K.A."/>
            <person name="Glover B."/>
            <person name="Gwatney N."/>
            <person name="Korajkic A."/>
            <person name="Long A."/>
            <person name="Mobberley J.M."/>
            <person name="Pantry S.N."/>
            <person name="Pazder G."/>
            <person name="Peterson S."/>
            <person name="Quintanilla J.D."/>
            <person name="Sprinkle R."/>
            <person name="Stephens J."/>
            <person name="Thomas P."/>
            <person name="Vaughn R."/>
            <person name="Weber M.J."/>
            <person name="Wooten L.L."/>
        </authorList>
    </citation>
    <scope>NUCLEOTIDE SEQUENCE [LARGE SCALE GENOMIC DNA]</scope>
    <source>
        <strain>ATCC 33889 / DSM 1251</strain>
    </source>
</reference>
<comment type="function">
    <text evidence="1">One of the primary rRNA binding proteins, this protein initially binds near the 5'-end of the 23S rRNA. It is important during the early stages of 50S assembly. It makes multiple contacts with different domains of the 23S rRNA in the assembled 50S subunit and ribosome.</text>
</comment>
<comment type="function">
    <text evidence="1">Forms part of the polypeptide exit tunnel.</text>
</comment>
<comment type="subunit">
    <text evidence="1">Part of the 50S ribosomal subunit.</text>
</comment>
<comment type="similarity">
    <text evidence="1">Belongs to the universal ribosomal protein uL4 family.</text>
</comment>
<accession>Q30TW3</accession>
<keyword id="KW-1185">Reference proteome</keyword>
<keyword id="KW-0687">Ribonucleoprotein</keyword>
<keyword id="KW-0689">Ribosomal protein</keyword>
<keyword id="KW-0694">RNA-binding</keyword>
<keyword id="KW-0699">rRNA-binding</keyword>
<organism>
    <name type="scientific">Sulfurimonas denitrificans (strain ATCC 33889 / DSM 1251)</name>
    <name type="common">Thiomicrospira denitrificans (strain ATCC 33889 / DSM 1251)</name>
    <dbReference type="NCBI Taxonomy" id="326298"/>
    <lineage>
        <taxon>Bacteria</taxon>
        <taxon>Pseudomonadati</taxon>
        <taxon>Campylobacterota</taxon>
        <taxon>Epsilonproteobacteria</taxon>
        <taxon>Campylobacterales</taxon>
        <taxon>Sulfurimonadaceae</taxon>
        <taxon>Sulfurimonas</taxon>
    </lineage>
</organism>
<proteinExistence type="inferred from homology"/>
<dbReference type="EMBL" id="CP000153">
    <property type="protein sequence ID" value="ABB43568.1"/>
    <property type="molecule type" value="Genomic_DNA"/>
</dbReference>
<dbReference type="RefSeq" id="WP_011371923.1">
    <property type="nucleotide sequence ID" value="NC_007575.1"/>
</dbReference>
<dbReference type="SMR" id="Q30TW3"/>
<dbReference type="STRING" id="326298.Suden_0287"/>
<dbReference type="KEGG" id="tdn:Suden_0287"/>
<dbReference type="eggNOG" id="COG0088">
    <property type="taxonomic scope" value="Bacteria"/>
</dbReference>
<dbReference type="HOGENOM" id="CLU_041575_5_2_7"/>
<dbReference type="Proteomes" id="UP000002714">
    <property type="component" value="Chromosome"/>
</dbReference>
<dbReference type="GO" id="GO:1990904">
    <property type="term" value="C:ribonucleoprotein complex"/>
    <property type="evidence" value="ECO:0007669"/>
    <property type="project" value="UniProtKB-KW"/>
</dbReference>
<dbReference type="GO" id="GO:0005840">
    <property type="term" value="C:ribosome"/>
    <property type="evidence" value="ECO:0007669"/>
    <property type="project" value="UniProtKB-KW"/>
</dbReference>
<dbReference type="GO" id="GO:0019843">
    <property type="term" value="F:rRNA binding"/>
    <property type="evidence" value="ECO:0007669"/>
    <property type="project" value="UniProtKB-UniRule"/>
</dbReference>
<dbReference type="GO" id="GO:0003735">
    <property type="term" value="F:structural constituent of ribosome"/>
    <property type="evidence" value="ECO:0007669"/>
    <property type="project" value="InterPro"/>
</dbReference>
<dbReference type="GO" id="GO:0006412">
    <property type="term" value="P:translation"/>
    <property type="evidence" value="ECO:0007669"/>
    <property type="project" value="UniProtKB-UniRule"/>
</dbReference>
<dbReference type="Gene3D" id="3.40.1370.10">
    <property type="match status" value="1"/>
</dbReference>
<dbReference type="HAMAP" id="MF_01328_B">
    <property type="entry name" value="Ribosomal_uL4_B"/>
    <property type="match status" value="1"/>
</dbReference>
<dbReference type="InterPro" id="IPR002136">
    <property type="entry name" value="Ribosomal_uL4"/>
</dbReference>
<dbReference type="InterPro" id="IPR013005">
    <property type="entry name" value="Ribosomal_uL4-like"/>
</dbReference>
<dbReference type="InterPro" id="IPR023574">
    <property type="entry name" value="Ribosomal_uL4_dom_sf"/>
</dbReference>
<dbReference type="NCBIfam" id="TIGR03953">
    <property type="entry name" value="rplD_bact"/>
    <property type="match status" value="1"/>
</dbReference>
<dbReference type="PANTHER" id="PTHR10746">
    <property type="entry name" value="50S RIBOSOMAL PROTEIN L4"/>
    <property type="match status" value="1"/>
</dbReference>
<dbReference type="PANTHER" id="PTHR10746:SF6">
    <property type="entry name" value="LARGE RIBOSOMAL SUBUNIT PROTEIN UL4M"/>
    <property type="match status" value="1"/>
</dbReference>
<dbReference type="Pfam" id="PF00573">
    <property type="entry name" value="Ribosomal_L4"/>
    <property type="match status" value="1"/>
</dbReference>
<dbReference type="SUPFAM" id="SSF52166">
    <property type="entry name" value="Ribosomal protein L4"/>
    <property type="match status" value="1"/>
</dbReference>
<feature type="chain" id="PRO_0000242458" description="Large ribosomal subunit protein uL4">
    <location>
        <begin position="1"/>
        <end position="204"/>
    </location>
</feature>
<feature type="region of interest" description="Disordered" evidence="2">
    <location>
        <begin position="52"/>
        <end position="76"/>
    </location>
</feature>
<protein>
    <recommendedName>
        <fullName evidence="1">Large ribosomal subunit protein uL4</fullName>
    </recommendedName>
    <alternativeName>
        <fullName evidence="3">50S ribosomal protein L4</fullName>
    </alternativeName>
</protein>